<name>ATP6_SALEP</name>
<protein>
    <recommendedName>
        <fullName evidence="1">ATP synthase subunit a</fullName>
    </recommendedName>
    <alternativeName>
        <fullName evidence="1">ATP synthase F0 sector subunit a</fullName>
    </alternativeName>
    <alternativeName>
        <fullName evidence="1">F-ATPase subunit 6</fullName>
    </alternativeName>
</protein>
<keyword id="KW-0066">ATP synthesis</keyword>
<keyword id="KW-0997">Cell inner membrane</keyword>
<keyword id="KW-1003">Cell membrane</keyword>
<keyword id="KW-0138">CF(0)</keyword>
<keyword id="KW-0375">Hydrogen ion transport</keyword>
<keyword id="KW-0406">Ion transport</keyword>
<keyword id="KW-0472">Membrane</keyword>
<keyword id="KW-0812">Transmembrane</keyword>
<keyword id="KW-1133">Transmembrane helix</keyword>
<keyword id="KW-0813">Transport</keyword>
<reference key="1">
    <citation type="journal article" date="2008" name="Genome Res.">
        <title>Comparative genome analysis of Salmonella enteritidis PT4 and Salmonella gallinarum 287/91 provides insights into evolutionary and host adaptation pathways.</title>
        <authorList>
            <person name="Thomson N.R."/>
            <person name="Clayton D.J."/>
            <person name="Windhorst D."/>
            <person name="Vernikos G."/>
            <person name="Davidson S."/>
            <person name="Churcher C."/>
            <person name="Quail M.A."/>
            <person name="Stevens M."/>
            <person name="Jones M.A."/>
            <person name="Watson M."/>
            <person name="Barron A."/>
            <person name="Layton A."/>
            <person name="Pickard D."/>
            <person name="Kingsley R.A."/>
            <person name="Bignell A."/>
            <person name="Clark L."/>
            <person name="Harris B."/>
            <person name="Ormond D."/>
            <person name="Abdellah Z."/>
            <person name="Brooks K."/>
            <person name="Cherevach I."/>
            <person name="Chillingworth T."/>
            <person name="Woodward J."/>
            <person name="Norberczak H."/>
            <person name="Lord A."/>
            <person name="Arrowsmith C."/>
            <person name="Jagels K."/>
            <person name="Moule S."/>
            <person name="Mungall K."/>
            <person name="Saunders M."/>
            <person name="Whitehead S."/>
            <person name="Chabalgoity J.A."/>
            <person name="Maskell D."/>
            <person name="Humphreys T."/>
            <person name="Roberts M."/>
            <person name="Barrow P.A."/>
            <person name="Dougan G."/>
            <person name="Parkhill J."/>
        </authorList>
    </citation>
    <scope>NUCLEOTIDE SEQUENCE [LARGE SCALE GENOMIC DNA]</scope>
    <source>
        <strain>P125109</strain>
    </source>
</reference>
<gene>
    <name evidence="1" type="primary">atpB</name>
    <name type="ordered locus">SEN3685</name>
</gene>
<dbReference type="EMBL" id="AM933172">
    <property type="protein sequence ID" value="CAR35261.1"/>
    <property type="molecule type" value="Genomic_DNA"/>
</dbReference>
<dbReference type="RefSeq" id="WP_000135632.1">
    <property type="nucleotide sequence ID" value="NC_011294.1"/>
</dbReference>
<dbReference type="SMR" id="B5QVD8"/>
<dbReference type="KEGG" id="set:SEN3685"/>
<dbReference type="HOGENOM" id="CLU_041018_1_0_6"/>
<dbReference type="Proteomes" id="UP000000613">
    <property type="component" value="Chromosome"/>
</dbReference>
<dbReference type="GO" id="GO:0005886">
    <property type="term" value="C:plasma membrane"/>
    <property type="evidence" value="ECO:0007669"/>
    <property type="project" value="UniProtKB-SubCell"/>
</dbReference>
<dbReference type="GO" id="GO:0045259">
    <property type="term" value="C:proton-transporting ATP synthase complex"/>
    <property type="evidence" value="ECO:0007669"/>
    <property type="project" value="UniProtKB-KW"/>
</dbReference>
<dbReference type="GO" id="GO:0046933">
    <property type="term" value="F:proton-transporting ATP synthase activity, rotational mechanism"/>
    <property type="evidence" value="ECO:0007669"/>
    <property type="project" value="UniProtKB-UniRule"/>
</dbReference>
<dbReference type="GO" id="GO:0042777">
    <property type="term" value="P:proton motive force-driven plasma membrane ATP synthesis"/>
    <property type="evidence" value="ECO:0007669"/>
    <property type="project" value="TreeGrafter"/>
</dbReference>
<dbReference type="CDD" id="cd00310">
    <property type="entry name" value="ATP-synt_Fo_a_6"/>
    <property type="match status" value="1"/>
</dbReference>
<dbReference type="FunFam" id="1.20.120.220:FF:000002">
    <property type="entry name" value="ATP synthase subunit a"/>
    <property type="match status" value="1"/>
</dbReference>
<dbReference type="Gene3D" id="1.20.120.220">
    <property type="entry name" value="ATP synthase, F0 complex, subunit A"/>
    <property type="match status" value="1"/>
</dbReference>
<dbReference type="HAMAP" id="MF_01393">
    <property type="entry name" value="ATP_synth_a_bact"/>
    <property type="match status" value="1"/>
</dbReference>
<dbReference type="InterPro" id="IPR045082">
    <property type="entry name" value="ATP_syn_F0_a_bact/chloroplast"/>
</dbReference>
<dbReference type="InterPro" id="IPR000568">
    <property type="entry name" value="ATP_synth_F0_asu"/>
</dbReference>
<dbReference type="InterPro" id="IPR023011">
    <property type="entry name" value="ATP_synth_F0_asu_AS"/>
</dbReference>
<dbReference type="InterPro" id="IPR035908">
    <property type="entry name" value="F0_ATP_A_sf"/>
</dbReference>
<dbReference type="NCBIfam" id="TIGR01131">
    <property type="entry name" value="ATP_synt_6_or_A"/>
    <property type="match status" value="1"/>
</dbReference>
<dbReference type="NCBIfam" id="NF004477">
    <property type="entry name" value="PRK05815.1-1"/>
    <property type="match status" value="1"/>
</dbReference>
<dbReference type="PANTHER" id="PTHR42823">
    <property type="entry name" value="ATP SYNTHASE SUBUNIT A, CHLOROPLASTIC"/>
    <property type="match status" value="1"/>
</dbReference>
<dbReference type="PANTHER" id="PTHR42823:SF3">
    <property type="entry name" value="ATP SYNTHASE SUBUNIT A, CHLOROPLASTIC"/>
    <property type="match status" value="1"/>
</dbReference>
<dbReference type="Pfam" id="PF00119">
    <property type="entry name" value="ATP-synt_A"/>
    <property type="match status" value="1"/>
</dbReference>
<dbReference type="PRINTS" id="PR00123">
    <property type="entry name" value="ATPASEA"/>
</dbReference>
<dbReference type="SUPFAM" id="SSF81336">
    <property type="entry name" value="F1F0 ATP synthase subunit A"/>
    <property type="match status" value="1"/>
</dbReference>
<dbReference type="PROSITE" id="PS00449">
    <property type="entry name" value="ATPASE_A"/>
    <property type="match status" value="1"/>
</dbReference>
<comment type="function">
    <text evidence="1">Key component of the proton channel; it plays a direct role in the translocation of protons across the membrane.</text>
</comment>
<comment type="subunit">
    <text evidence="1">F-type ATPases have 2 components, CF(1) - the catalytic core - and CF(0) - the membrane proton channel. CF(1) has five subunits: alpha(3), beta(3), gamma(1), delta(1), epsilon(1). CF(0) has three main subunits: a(1), b(2) and c(9-12). The alpha and beta chains form an alternating ring which encloses part of the gamma chain. CF(1) is attached to CF(0) by a central stalk formed by the gamma and epsilon chains, while a peripheral stalk is formed by the delta and b chains.</text>
</comment>
<comment type="subcellular location">
    <subcellularLocation>
        <location evidence="1">Cell inner membrane</location>
        <topology evidence="1">Multi-pass membrane protein</topology>
    </subcellularLocation>
</comment>
<comment type="similarity">
    <text evidence="1">Belongs to the ATPase A chain family.</text>
</comment>
<organism>
    <name type="scientific">Salmonella enteritidis PT4 (strain P125109)</name>
    <dbReference type="NCBI Taxonomy" id="550537"/>
    <lineage>
        <taxon>Bacteria</taxon>
        <taxon>Pseudomonadati</taxon>
        <taxon>Pseudomonadota</taxon>
        <taxon>Gammaproteobacteria</taxon>
        <taxon>Enterobacterales</taxon>
        <taxon>Enterobacteriaceae</taxon>
        <taxon>Salmonella</taxon>
    </lineage>
</organism>
<feature type="chain" id="PRO_0000362436" description="ATP synthase subunit a">
    <location>
        <begin position="1"/>
        <end position="271"/>
    </location>
</feature>
<feature type="transmembrane region" description="Helical" evidence="1">
    <location>
        <begin position="38"/>
        <end position="58"/>
    </location>
</feature>
<feature type="transmembrane region" description="Helical" evidence="1">
    <location>
        <begin position="100"/>
        <end position="120"/>
    </location>
</feature>
<feature type="transmembrane region" description="Helical" evidence="1">
    <location>
        <begin position="146"/>
        <end position="166"/>
    </location>
</feature>
<feature type="transmembrane region" description="Helical" evidence="1">
    <location>
        <begin position="220"/>
        <end position="240"/>
    </location>
</feature>
<feature type="transmembrane region" description="Helical" evidence="1">
    <location>
        <begin position="242"/>
        <end position="262"/>
    </location>
</feature>
<proteinExistence type="inferred from homology"/>
<evidence type="ECO:0000255" key="1">
    <source>
        <dbReference type="HAMAP-Rule" id="MF_01393"/>
    </source>
</evidence>
<accession>B5QVD8</accession>
<sequence>MASENMTPQEYIGHHLNNLQLDLRTFSLVDPQNPPATFWTLNIDSMFFSVVLGLLFLVMFRSVAKKATSGVPGKFQTAIELIVGFVHGSVKDMYHGKSKLIAPLALTIFVWVFLMNLMDLLPIDLLPYIAEHWLGLPATRVVPSADVNITLSMALGVFILILFYSIKMKGIGGFAKELTLQPFNHWAFIPVNLILEGVSLLSKPVSLGLRLFGNMYAGELIFILIAGLLPWWSQWILNVPWAIFHILIITLQAFIFMVLTIVYLSMASEEH</sequence>